<protein>
    <recommendedName>
        <fullName evidence="2">Small ribosomal subunit protein uS12</fullName>
    </recommendedName>
    <alternativeName>
        <fullName evidence="3">30S ribosomal protein S12</fullName>
    </alternativeName>
</protein>
<evidence type="ECO:0000250" key="1"/>
<evidence type="ECO:0000255" key="2">
    <source>
        <dbReference type="HAMAP-Rule" id="MF_00403"/>
    </source>
</evidence>
<evidence type="ECO:0000305" key="3"/>
<comment type="function">
    <text evidence="2">With S4 and S5 plays an important role in translational accuracy.</text>
</comment>
<comment type="function">
    <text evidence="2">Interacts with and stabilizes bases of the 16S rRNA that are involved in tRNA selection in the A site and with the mRNA backbone. Located at the interface of the 30S and 50S subunits, it traverses the body of the 30S subunit contacting proteins on the other side and probably holding the rRNA structure together. The combined cluster of proteins S8, S12 and S17 appears to hold together the shoulder and platform of the 30S subunit.</text>
</comment>
<comment type="subunit">
    <text evidence="2">Part of the 30S ribosomal subunit. Contacts proteins S8 and S17. May interact with IF1 in the 30S initiation complex.</text>
</comment>
<comment type="similarity">
    <text evidence="2">Belongs to the universal ribosomal protein uS12 family.</text>
</comment>
<name>RS12_CAUVC</name>
<keyword id="KW-0488">Methylation</keyword>
<keyword id="KW-1185">Reference proteome</keyword>
<keyword id="KW-0687">Ribonucleoprotein</keyword>
<keyword id="KW-0689">Ribosomal protein</keyword>
<keyword id="KW-0694">RNA-binding</keyword>
<keyword id="KW-0699">rRNA-binding</keyword>
<keyword id="KW-0820">tRNA-binding</keyword>
<reference key="1">
    <citation type="journal article" date="2001" name="Proc. Natl. Acad. Sci. U.S.A.">
        <title>Complete genome sequence of Caulobacter crescentus.</title>
        <authorList>
            <person name="Nierman W.C."/>
            <person name="Feldblyum T.V."/>
            <person name="Laub M.T."/>
            <person name="Paulsen I.T."/>
            <person name="Nelson K.E."/>
            <person name="Eisen J.A."/>
            <person name="Heidelberg J.F."/>
            <person name="Alley M.R.K."/>
            <person name="Ohta N."/>
            <person name="Maddock J.R."/>
            <person name="Potocka I."/>
            <person name="Nelson W.C."/>
            <person name="Newton A."/>
            <person name="Stephens C."/>
            <person name="Phadke N.D."/>
            <person name="Ely B."/>
            <person name="DeBoy R.T."/>
            <person name="Dodson R.J."/>
            <person name="Durkin A.S."/>
            <person name="Gwinn M.L."/>
            <person name="Haft D.H."/>
            <person name="Kolonay J.F."/>
            <person name="Smit J."/>
            <person name="Craven M.B."/>
            <person name="Khouri H.M."/>
            <person name="Shetty J."/>
            <person name="Berry K.J."/>
            <person name="Utterback T.R."/>
            <person name="Tran K."/>
            <person name="Wolf A.M."/>
            <person name="Vamathevan J.J."/>
            <person name="Ermolaeva M.D."/>
            <person name="White O."/>
            <person name="Salzberg S.L."/>
            <person name="Venter J.C."/>
            <person name="Shapiro L."/>
            <person name="Fraser C.M."/>
        </authorList>
    </citation>
    <scope>NUCLEOTIDE SEQUENCE [LARGE SCALE GENOMIC DNA]</scope>
    <source>
        <strain>ATCC 19089 / CIP 103742 / CB 15</strain>
    </source>
</reference>
<sequence length="123" mass="13825">MPTINQLIRKPRSPKPVRNKVPALKGCPQRRGVCTRVYTTTPKKPNSALRKVAKVRLTTGIEAVCYIPGEGHNLQEHSVVLIRGGRVKDLPGVRYHILRGVLDTQGVKDRKQRRSLYGAKRPK</sequence>
<dbReference type="EMBL" id="AE005673">
    <property type="protein sequence ID" value="AAK25164.1"/>
    <property type="molecule type" value="Genomic_DNA"/>
</dbReference>
<dbReference type="PIR" id="H87645">
    <property type="entry name" value="H87645"/>
</dbReference>
<dbReference type="RefSeq" id="NP_421996.1">
    <property type="nucleotide sequence ID" value="NC_002696.2"/>
</dbReference>
<dbReference type="RefSeq" id="WP_004624021.1">
    <property type="nucleotide sequence ID" value="NC_002696.2"/>
</dbReference>
<dbReference type="SMR" id="Q9A3K2"/>
<dbReference type="STRING" id="190650.CC_3202"/>
<dbReference type="EnsemblBacteria" id="AAK25164">
    <property type="protein sequence ID" value="AAK25164"/>
    <property type="gene ID" value="CC_3202"/>
</dbReference>
<dbReference type="KEGG" id="ccr:CC_3202"/>
<dbReference type="PATRIC" id="fig|190650.5.peg.3208"/>
<dbReference type="eggNOG" id="COG0048">
    <property type="taxonomic scope" value="Bacteria"/>
</dbReference>
<dbReference type="HOGENOM" id="CLU_104295_1_2_5"/>
<dbReference type="BioCyc" id="CAULO:CC3202-MONOMER"/>
<dbReference type="Proteomes" id="UP000001816">
    <property type="component" value="Chromosome"/>
</dbReference>
<dbReference type="GO" id="GO:0015935">
    <property type="term" value="C:small ribosomal subunit"/>
    <property type="evidence" value="ECO:0007669"/>
    <property type="project" value="InterPro"/>
</dbReference>
<dbReference type="GO" id="GO:0019843">
    <property type="term" value="F:rRNA binding"/>
    <property type="evidence" value="ECO:0007669"/>
    <property type="project" value="UniProtKB-UniRule"/>
</dbReference>
<dbReference type="GO" id="GO:0003735">
    <property type="term" value="F:structural constituent of ribosome"/>
    <property type="evidence" value="ECO:0007669"/>
    <property type="project" value="InterPro"/>
</dbReference>
<dbReference type="GO" id="GO:0000049">
    <property type="term" value="F:tRNA binding"/>
    <property type="evidence" value="ECO:0007669"/>
    <property type="project" value="UniProtKB-UniRule"/>
</dbReference>
<dbReference type="GO" id="GO:0006412">
    <property type="term" value="P:translation"/>
    <property type="evidence" value="ECO:0007669"/>
    <property type="project" value="UniProtKB-UniRule"/>
</dbReference>
<dbReference type="CDD" id="cd03368">
    <property type="entry name" value="Ribosomal_S12"/>
    <property type="match status" value="1"/>
</dbReference>
<dbReference type="FunFam" id="2.40.50.140:FF:000001">
    <property type="entry name" value="30S ribosomal protein S12"/>
    <property type="match status" value="1"/>
</dbReference>
<dbReference type="Gene3D" id="2.40.50.140">
    <property type="entry name" value="Nucleic acid-binding proteins"/>
    <property type="match status" value="1"/>
</dbReference>
<dbReference type="HAMAP" id="MF_00403_B">
    <property type="entry name" value="Ribosomal_uS12_B"/>
    <property type="match status" value="1"/>
</dbReference>
<dbReference type="InterPro" id="IPR012340">
    <property type="entry name" value="NA-bd_OB-fold"/>
</dbReference>
<dbReference type="InterPro" id="IPR006032">
    <property type="entry name" value="Ribosomal_uS12"/>
</dbReference>
<dbReference type="InterPro" id="IPR005679">
    <property type="entry name" value="Ribosomal_uS12_bac"/>
</dbReference>
<dbReference type="NCBIfam" id="TIGR00981">
    <property type="entry name" value="rpsL_bact"/>
    <property type="match status" value="1"/>
</dbReference>
<dbReference type="PANTHER" id="PTHR11652">
    <property type="entry name" value="30S RIBOSOMAL PROTEIN S12 FAMILY MEMBER"/>
    <property type="match status" value="1"/>
</dbReference>
<dbReference type="Pfam" id="PF00164">
    <property type="entry name" value="Ribosom_S12_S23"/>
    <property type="match status" value="1"/>
</dbReference>
<dbReference type="PIRSF" id="PIRSF002133">
    <property type="entry name" value="Ribosomal_S12/S23"/>
    <property type="match status" value="1"/>
</dbReference>
<dbReference type="PRINTS" id="PR01034">
    <property type="entry name" value="RIBOSOMALS12"/>
</dbReference>
<dbReference type="SUPFAM" id="SSF50249">
    <property type="entry name" value="Nucleic acid-binding proteins"/>
    <property type="match status" value="1"/>
</dbReference>
<dbReference type="PROSITE" id="PS00055">
    <property type="entry name" value="RIBOSOMAL_S12"/>
    <property type="match status" value="1"/>
</dbReference>
<gene>
    <name evidence="2" type="primary">rpsL</name>
    <name type="ordered locus">CC_3202</name>
</gene>
<proteinExistence type="inferred from homology"/>
<organism>
    <name type="scientific">Caulobacter vibrioides (strain ATCC 19089 / CIP 103742 / CB 15)</name>
    <name type="common">Caulobacter crescentus</name>
    <dbReference type="NCBI Taxonomy" id="190650"/>
    <lineage>
        <taxon>Bacteria</taxon>
        <taxon>Pseudomonadati</taxon>
        <taxon>Pseudomonadota</taxon>
        <taxon>Alphaproteobacteria</taxon>
        <taxon>Caulobacterales</taxon>
        <taxon>Caulobacteraceae</taxon>
        <taxon>Caulobacter</taxon>
    </lineage>
</organism>
<feature type="chain" id="PRO_0000146202" description="Small ribosomal subunit protein uS12">
    <location>
        <begin position="1"/>
        <end position="123"/>
    </location>
</feature>
<feature type="modified residue" description="3-methylthioaspartic acid" evidence="1">
    <location>
        <position position="89"/>
    </location>
</feature>
<accession>Q9A3K2</accession>